<dbReference type="EMBL" id="AC211486">
    <property type="status" value="NOT_ANNOTATED_CDS"/>
    <property type="molecule type" value="Genomic_DNA"/>
</dbReference>
<dbReference type="RefSeq" id="NP_001369492.1">
    <property type="nucleotide sequence ID" value="NM_001382563.2"/>
</dbReference>
<dbReference type="RefSeq" id="XP_047275733.1">
    <property type="nucleotide sequence ID" value="XM_047419777.1"/>
</dbReference>
<dbReference type="SMR" id="A0A494C0Z2"/>
<dbReference type="STRING" id="9606.ENSP00000498497"/>
<dbReference type="MassIVE" id="A0A494C0Z2"/>
<dbReference type="Ensembl" id="ENST00000652175.2">
    <property type="protein sequence ID" value="ENSP00000498801.1"/>
    <property type="gene ID" value="ENSG00000286038.2"/>
</dbReference>
<dbReference type="GeneID" id="105180390"/>
<dbReference type="MANE-Select" id="ENST00000652175.2">
    <property type="protein sequence ID" value="ENSP00000498801.1"/>
    <property type="RefSeq nucleotide sequence ID" value="NM_001382563.2"/>
    <property type="RefSeq protein sequence ID" value="NP_001369492.1"/>
</dbReference>
<dbReference type="AGR" id="HGNC:51509"/>
<dbReference type="GeneCards" id="SPDYE13"/>
<dbReference type="HGNC" id="HGNC:51509">
    <property type="gene designation" value="SPDYE13"/>
</dbReference>
<dbReference type="HPA" id="ENSG00000286038">
    <property type="expression patterns" value="Not detected"/>
</dbReference>
<dbReference type="neXtProt" id="NX_A0A494C0Z2"/>
<dbReference type="VEuPathDB" id="HostDB:ENSG00000286014"/>
<dbReference type="VEuPathDB" id="HostDB:ENSG00000286038"/>
<dbReference type="VEuPathDB" id="HostDB:ENSG00000286137"/>
<dbReference type="InParanoid" id="A0A494C0Z2"/>
<dbReference type="OMA" id="WENKLTI"/>
<dbReference type="Proteomes" id="UP000005640">
    <property type="component" value="Chromosome 7"/>
</dbReference>
<dbReference type="GO" id="GO:0019901">
    <property type="term" value="F:protein kinase binding"/>
    <property type="evidence" value="ECO:0000318"/>
    <property type="project" value="GO_Central"/>
</dbReference>
<dbReference type="InterPro" id="IPR020984">
    <property type="entry name" value="Speedy"/>
</dbReference>
<dbReference type="PANTHER" id="PTHR31156">
    <property type="entry name" value="WBSCR19-LIKE PROTEIN"/>
    <property type="match status" value="1"/>
</dbReference>
<dbReference type="Pfam" id="PF11357">
    <property type="entry name" value="Spy1"/>
    <property type="match status" value="1"/>
</dbReference>
<accession>A0A494C0Z2</accession>
<gene>
    <name evidence="3" type="primary">SPDYE13</name>
</gene>
<organism>
    <name type="scientific">Homo sapiens</name>
    <name type="common">Human</name>
    <dbReference type="NCBI Taxonomy" id="9606"/>
    <lineage>
        <taxon>Eukaryota</taxon>
        <taxon>Metazoa</taxon>
        <taxon>Chordata</taxon>
        <taxon>Craniata</taxon>
        <taxon>Vertebrata</taxon>
        <taxon>Euteleostomi</taxon>
        <taxon>Mammalia</taxon>
        <taxon>Eutheria</taxon>
        <taxon>Euarchontoglires</taxon>
        <taxon>Primates</taxon>
        <taxon>Haplorrhini</taxon>
        <taxon>Catarrhini</taxon>
        <taxon>Hominidae</taxon>
        <taxon>Homo</taxon>
    </lineage>
</organism>
<protein>
    <recommendedName>
        <fullName evidence="2">Speedy protein E13</fullName>
    </recommendedName>
</protein>
<keyword id="KW-1185">Reference proteome</keyword>
<comment type="similarity">
    <text evidence="2">Belongs to the Speedy/Ringo family.</text>
</comment>
<sequence>MGQILGKIMMSHQPQPQEERSPQRSTSGYPLQEVVDDEVLGPSAPGVDPSPPRRSLGWKRKRECLDESDDEPEKELAPEPEETWVAETLCGLKMKAKRRRVSLVLPEYYEAFNRLLEDPVIKRLLAWDKDLRVSDKYLLAMVIAYFSRAGLPSWQYQRIHFFLALYLANDMEEDDEAPKQNIFYFLYEETRSHIPLLSELWFQLCRYMNPRARKNCSQIALFRKYRFHFFCSMRCRAWVSLEELEEIQAYDPEHWVWARDRAHLS</sequence>
<proteinExistence type="inferred from homology"/>
<reference key="1">
    <citation type="journal article" date="2003" name="Nature">
        <title>The DNA sequence of human chromosome 7.</title>
        <authorList>
            <person name="Hillier L.W."/>
            <person name="Fulton R.S."/>
            <person name="Fulton L.A."/>
            <person name="Graves T.A."/>
            <person name="Pepin K.H."/>
            <person name="Wagner-McPherson C."/>
            <person name="Layman D."/>
            <person name="Maas J."/>
            <person name="Jaeger S."/>
            <person name="Walker R."/>
            <person name="Wylie K."/>
            <person name="Sekhon M."/>
            <person name="Becker M.C."/>
            <person name="O'Laughlin M.D."/>
            <person name="Schaller M.E."/>
            <person name="Fewell G.A."/>
            <person name="Delehaunty K.D."/>
            <person name="Miner T.L."/>
            <person name="Nash W.E."/>
            <person name="Cordes M."/>
            <person name="Du H."/>
            <person name="Sun H."/>
            <person name="Edwards J."/>
            <person name="Bradshaw-Cordum H."/>
            <person name="Ali J."/>
            <person name="Andrews S."/>
            <person name="Isak A."/>
            <person name="Vanbrunt A."/>
            <person name="Nguyen C."/>
            <person name="Du F."/>
            <person name="Lamar B."/>
            <person name="Courtney L."/>
            <person name="Kalicki J."/>
            <person name="Ozersky P."/>
            <person name="Bielicki L."/>
            <person name="Scott K."/>
            <person name="Holmes A."/>
            <person name="Harkins R."/>
            <person name="Harris A."/>
            <person name="Strong C.M."/>
            <person name="Hou S."/>
            <person name="Tomlinson C."/>
            <person name="Dauphin-Kohlberg S."/>
            <person name="Kozlowicz-Reilly A."/>
            <person name="Leonard S."/>
            <person name="Rohlfing T."/>
            <person name="Rock S.M."/>
            <person name="Tin-Wollam A.-M."/>
            <person name="Abbott A."/>
            <person name="Minx P."/>
            <person name="Maupin R."/>
            <person name="Strowmatt C."/>
            <person name="Latreille P."/>
            <person name="Miller N."/>
            <person name="Johnson D."/>
            <person name="Murray J."/>
            <person name="Woessner J.P."/>
            <person name="Wendl M.C."/>
            <person name="Yang S.-P."/>
            <person name="Schultz B.R."/>
            <person name="Wallis J.W."/>
            <person name="Spieth J."/>
            <person name="Bieri T.A."/>
            <person name="Nelson J.O."/>
            <person name="Berkowicz N."/>
            <person name="Wohldmann P.E."/>
            <person name="Cook L.L."/>
            <person name="Hickenbotham M.T."/>
            <person name="Eldred J."/>
            <person name="Williams D."/>
            <person name="Bedell J.A."/>
            <person name="Mardis E.R."/>
            <person name="Clifton S.W."/>
            <person name="Chissoe S.L."/>
            <person name="Marra M.A."/>
            <person name="Raymond C."/>
            <person name="Haugen E."/>
            <person name="Gillett W."/>
            <person name="Zhou Y."/>
            <person name="James R."/>
            <person name="Phelps K."/>
            <person name="Iadanoto S."/>
            <person name="Bubb K."/>
            <person name="Simms E."/>
            <person name="Levy R."/>
            <person name="Clendenning J."/>
            <person name="Kaul R."/>
            <person name="Kent W.J."/>
            <person name="Furey T.S."/>
            <person name="Baertsch R.A."/>
            <person name="Brent M.R."/>
            <person name="Keibler E."/>
            <person name="Flicek P."/>
            <person name="Bork P."/>
            <person name="Suyama M."/>
            <person name="Bailey J.A."/>
            <person name="Portnoy M.E."/>
            <person name="Torrents D."/>
            <person name="Chinwalla A.T."/>
            <person name="Gish W.R."/>
            <person name="Eddy S.R."/>
            <person name="McPherson J.D."/>
            <person name="Olson M.V."/>
            <person name="Eichler E.E."/>
            <person name="Green E.D."/>
            <person name="Waterston R.H."/>
            <person name="Wilson R.K."/>
        </authorList>
    </citation>
    <scope>NUCLEOTIDE SEQUENCE [LARGE SCALE GENOMIC DNA]</scope>
</reference>
<name>SPD13_HUMAN</name>
<evidence type="ECO:0000256" key="1">
    <source>
        <dbReference type="SAM" id="MobiDB-lite"/>
    </source>
</evidence>
<evidence type="ECO:0000305" key="2"/>
<evidence type="ECO:0000312" key="3">
    <source>
        <dbReference type="HGNC" id="HGNC:51509"/>
    </source>
</evidence>
<feature type="chain" id="PRO_0000451620" description="Speedy protein E13">
    <location>
        <begin position="1"/>
        <end position="265"/>
    </location>
</feature>
<feature type="region of interest" description="Disordered" evidence="1">
    <location>
        <begin position="1"/>
        <end position="80"/>
    </location>
</feature>
<feature type="compositionally biased region" description="Acidic residues" evidence="1">
    <location>
        <begin position="66"/>
        <end position="80"/>
    </location>
</feature>